<reference key="1">
    <citation type="journal article" date="2001" name="Lancet">
        <title>Whole genome sequencing of meticillin-resistant Staphylococcus aureus.</title>
        <authorList>
            <person name="Kuroda M."/>
            <person name="Ohta T."/>
            <person name="Uchiyama I."/>
            <person name="Baba T."/>
            <person name="Yuzawa H."/>
            <person name="Kobayashi I."/>
            <person name="Cui L."/>
            <person name="Oguchi A."/>
            <person name="Aoki K."/>
            <person name="Nagai Y."/>
            <person name="Lian J.-Q."/>
            <person name="Ito T."/>
            <person name="Kanamori M."/>
            <person name="Matsumaru H."/>
            <person name="Maruyama A."/>
            <person name="Murakami H."/>
            <person name="Hosoyama A."/>
            <person name="Mizutani-Ui Y."/>
            <person name="Takahashi N.K."/>
            <person name="Sawano T."/>
            <person name="Inoue R."/>
            <person name="Kaito C."/>
            <person name="Sekimizu K."/>
            <person name="Hirakawa H."/>
            <person name="Kuhara S."/>
            <person name="Goto S."/>
            <person name="Yabuzaki J."/>
            <person name="Kanehisa M."/>
            <person name="Yamashita A."/>
            <person name="Oshima K."/>
            <person name="Furuya K."/>
            <person name="Yoshino C."/>
            <person name="Shiba T."/>
            <person name="Hattori M."/>
            <person name="Ogasawara N."/>
            <person name="Hayashi H."/>
            <person name="Hiramatsu K."/>
        </authorList>
    </citation>
    <scope>NUCLEOTIDE SEQUENCE [LARGE SCALE GENOMIC DNA]</scope>
    <source>
        <strain>N315</strain>
    </source>
</reference>
<dbReference type="EC" id="3.4.21.-"/>
<dbReference type="EMBL" id="BA000018">
    <property type="protein sequence ID" value="BAB42896.1"/>
    <property type="molecule type" value="Genomic_DNA"/>
</dbReference>
<dbReference type="PIR" id="A89967">
    <property type="entry name" value="A89967"/>
</dbReference>
<dbReference type="RefSeq" id="WP_001038704.1">
    <property type="nucleotide sequence ID" value="NC_002745.2"/>
</dbReference>
<dbReference type="SMR" id="Q7A4Y3"/>
<dbReference type="MEROPS" id="S01.526"/>
<dbReference type="EnsemblBacteria" id="BAB42896">
    <property type="protein sequence ID" value="BAB42896"/>
    <property type="gene ID" value="BAB42896"/>
</dbReference>
<dbReference type="KEGG" id="sau:SA1628"/>
<dbReference type="HOGENOM" id="CLU_073589_2_0_9"/>
<dbReference type="GO" id="GO:0005576">
    <property type="term" value="C:extracellular region"/>
    <property type="evidence" value="ECO:0007669"/>
    <property type="project" value="UniProtKB-SubCell"/>
</dbReference>
<dbReference type="GO" id="GO:0008236">
    <property type="term" value="F:serine-type peptidase activity"/>
    <property type="evidence" value="ECO:0007669"/>
    <property type="project" value="UniProtKB-KW"/>
</dbReference>
<dbReference type="GO" id="GO:0006508">
    <property type="term" value="P:proteolysis"/>
    <property type="evidence" value="ECO:0007669"/>
    <property type="project" value="UniProtKB-KW"/>
</dbReference>
<dbReference type="Gene3D" id="2.40.10.10">
    <property type="entry name" value="Trypsin-like serine proteases"/>
    <property type="match status" value="2"/>
</dbReference>
<dbReference type="InterPro" id="IPR009003">
    <property type="entry name" value="Peptidase_S1_PA"/>
</dbReference>
<dbReference type="InterPro" id="IPR043504">
    <property type="entry name" value="Peptidase_S1_PA_chymotrypsin"/>
</dbReference>
<dbReference type="InterPro" id="IPR008256">
    <property type="entry name" value="Peptidase_S1B"/>
</dbReference>
<dbReference type="InterPro" id="IPR028301">
    <property type="entry name" value="V8_his_AS"/>
</dbReference>
<dbReference type="PANTHER" id="PTHR43019:SF23">
    <property type="entry name" value="PROTEASE DO-LIKE 5, CHLOROPLASTIC"/>
    <property type="match status" value="1"/>
</dbReference>
<dbReference type="PANTHER" id="PTHR43019">
    <property type="entry name" value="SERINE ENDOPROTEASE DEGS"/>
    <property type="match status" value="1"/>
</dbReference>
<dbReference type="Pfam" id="PF13365">
    <property type="entry name" value="Trypsin_2"/>
    <property type="match status" value="1"/>
</dbReference>
<dbReference type="PRINTS" id="PR00839">
    <property type="entry name" value="V8PROTEASE"/>
</dbReference>
<dbReference type="SUPFAM" id="SSF50494">
    <property type="entry name" value="Trypsin-like serine proteases"/>
    <property type="match status" value="1"/>
</dbReference>
<dbReference type="PROSITE" id="PS00672">
    <property type="entry name" value="V8_HIS"/>
    <property type="match status" value="1"/>
</dbReference>
<keyword id="KW-0378">Hydrolase</keyword>
<keyword id="KW-0645">Protease</keyword>
<keyword id="KW-0964">Secreted</keyword>
<keyword id="KW-0720">Serine protease</keyword>
<keyword id="KW-0732">Signal</keyword>
<accession>Q7A4Y3</accession>
<proteinExistence type="inferred from homology"/>
<name>SPLD_STAAN</name>
<protein>
    <recommendedName>
        <fullName>Serine protease SplD</fullName>
        <ecNumber>3.4.21.-</ecNumber>
    </recommendedName>
</protein>
<evidence type="ECO:0000250" key="1"/>
<evidence type="ECO:0000255" key="2"/>
<evidence type="ECO:0000305" key="3"/>
<feature type="signal peptide" evidence="2">
    <location>
        <begin position="1"/>
        <end position="36"/>
    </location>
</feature>
<feature type="chain" id="PRO_0000359567" description="Serine protease SplD">
    <location>
        <begin position="37"/>
        <end position="239"/>
    </location>
</feature>
<feature type="active site" description="Charge relay system" evidence="1">
    <location>
        <position position="75"/>
    </location>
</feature>
<feature type="active site" description="Charge relay system" evidence="1">
    <location>
        <position position="114"/>
    </location>
</feature>
<feature type="active site" description="Charge relay system" evidence="1">
    <location>
        <position position="192"/>
    </location>
</feature>
<organism>
    <name type="scientific">Staphylococcus aureus (strain N315)</name>
    <dbReference type="NCBI Taxonomy" id="158879"/>
    <lineage>
        <taxon>Bacteria</taxon>
        <taxon>Bacillati</taxon>
        <taxon>Bacillota</taxon>
        <taxon>Bacilli</taxon>
        <taxon>Bacillales</taxon>
        <taxon>Staphylococcaceae</taxon>
        <taxon>Staphylococcus</taxon>
    </lineage>
</organism>
<gene>
    <name type="primary">splD</name>
    <name type="ordered locus">SA1628</name>
</gene>
<sequence>MNKNIIIKSIAALTILTSITGVGTTVVDGIQQTAKAENSVKLITNTNVAPYSGVTWMGAGTGFVVGNHTIITNKHVTYHMKVGDEIKAHPNGFYNNGGGLYKVTKIVDYPGKEDIAVVQVEEKSTQPKGRKFKDFTSKFNIASEAKENEPISVIGYPNPNGNKLQMYESTGKVLSVNGNIVTSDAVVQPGSSGSPILNSKREAIGVMYASDKPTGESTRSFAVYFSPEIKKFIADNLDK</sequence>
<comment type="subcellular location">
    <subcellularLocation>
        <location evidence="1">Secreted</location>
    </subcellularLocation>
</comment>
<comment type="similarity">
    <text evidence="3">Belongs to the peptidase S1B family.</text>
</comment>